<evidence type="ECO:0000250" key="1">
    <source>
        <dbReference type="UniProtKB" id="Q04371"/>
    </source>
</evidence>
<evidence type="ECO:0000250" key="2">
    <source>
        <dbReference type="UniProtKB" id="Q9H993"/>
    </source>
</evidence>
<evidence type="ECO:0000303" key="3">
    <source ref="1"/>
</evidence>
<evidence type="ECO:0000305" key="4"/>
<reference key="1">
    <citation type="submission" date="2005-03" db="EMBL/GenBank/DDBJ databases">
        <authorList>
            <consortium name="NIH - Zebrafish Gene Collection (ZGC) project"/>
        </authorList>
    </citation>
    <scope>NUCLEOTIDE SEQUENCE [LARGE SCALE MRNA]</scope>
    <source>
        <tissue>Embryo</tissue>
    </source>
</reference>
<feature type="chain" id="PRO_0000230798" description="Damage-control phosphatase ARMT1">
    <location>
        <begin position="1"/>
        <end position="448"/>
    </location>
</feature>
<feature type="short sequence motif" description="Subfamily III RTxK motif" evidence="1">
    <location>
        <begin position="405"/>
        <end position="408"/>
    </location>
</feature>
<feature type="binding site" evidence="1">
    <location>
        <begin position="257"/>
        <end position="258"/>
    </location>
    <ligand>
        <name>substrate</name>
    </ligand>
</feature>
<feature type="binding site" evidence="1">
    <location>
        <position position="257"/>
    </location>
    <ligand>
        <name>Mn(2+)</name>
        <dbReference type="ChEBI" id="CHEBI:29035"/>
        <note>catalytic</note>
    </ligand>
</feature>
<feature type="binding site" evidence="1">
    <location>
        <position position="258"/>
    </location>
    <ligand>
        <name>Mn(2+)</name>
        <dbReference type="ChEBI" id="CHEBI:29035"/>
        <note>catalytic</note>
    </ligand>
</feature>
<feature type="binding site" evidence="2">
    <location>
        <position position="262"/>
    </location>
    <ligand>
        <name>S-adenosyl-L-methionine</name>
        <dbReference type="ChEBI" id="CHEBI:59789"/>
    </ligand>
</feature>
<feature type="binding site" evidence="1">
    <location>
        <position position="295"/>
    </location>
    <ligand>
        <name>Mn(2+)</name>
        <dbReference type="ChEBI" id="CHEBI:29035"/>
        <note>catalytic</note>
    </ligand>
</feature>
<feature type="binding site" evidence="2">
    <location>
        <position position="295"/>
    </location>
    <ligand>
        <name>S-adenosyl-L-methionine</name>
        <dbReference type="ChEBI" id="CHEBI:59789"/>
    </ligand>
</feature>
<feature type="binding site" evidence="1">
    <location>
        <begin position="371"/>
        <end position="375"/>
    </location>
    <ligand>
        <name>substrate</name>
    </ligand>
</feature>
<feature type="binding site" evidence="1">
    <location>
        <position position="408"/>
    </location>
    <ligand>
        <name>substrate</name>
    </ligand>
</feature>
<sequence length="448" mass="51776">MEAEGMLPPQSLSAKFEGSFAYLTVRDRLPTILTKVVDTLHRNKDNFYKEYGEEGTEAEKRAISFLSRLRNELQTDKPVLALTDNAEDTQAWNEYMERQQDLMENGQLVSWFKSPWLYVECYMYRRIQEALYMNPPMHNFDPFKEGKTQSYFESQQAIKYLCTYLQELITNMENMTEIQLRENFLKLIQVSLWGNKCDLSISAGQDNSQKLSPIDSLPDLQRFILVDDSSMVWSTLVASQGSRSSGMKHARVDIILDNAGFELVTDLVLADFLISSGLAKQIRFHGKSIPWFVSDVTKQDFEWTIKQTMAANHKWMSASGVQWKHFMKEGTWSYHDHPFWTLPHEFCDMTVDAANLYSTLQTSDLILFKGDLNYRKLTGDRKWEHTVRFDQALRGFQPAPLCSLRTLKADVQVGLQAGHAEKLSTQDPDWMTNGKYAVVQFSSPHREQ</sequence>
<organism>
    <name type="scientific">Danio rerio</name>
    <name type="common">Zebrafish</name>
    <name type="synonym">Brachydanio rerio</name>
    <dbReference type="NCBI Taxonomy" id="7955"/>
    <lineage>
        <taxon>Eukaryota</taxon>
        <taxon>Metazoa</taxon>
        <taxon>Chordata</taxon>
        <taxon>Craniata</taxon>
        <taxon>Vertebrata</taxon>
        <taxon>Euteleostomi</taxon>
        <taxon>Actinopterygii</taxon>
        <taxon>Neopterygii</taxon>
        <taxon>Teleostei</taxon>
        <taxon>Ostariophysi</taxon>
        <taxon>Cypriniformes</taxon>
        <taxon>Danionidae</taxon>
        <taxon>Danioninae</taxon>
        <taxon>Danio</taxon>
    </lineage>
</organism>
<keyword id="KW-0378">Hydrolase</keyword>
<keyword id="KW-0464">Manganese</keyword>
<keyword id="KW-0479">Metal-binding</keyword>
<keyword id="KW-0489">Methyltransferase</keyword>
<keyword id="KW-0533">Nickel</keyword>
<keyword id="KW-1185">Reference proteome</keyword>
<keyword id="KW-0949">S-adenosyl-L-methionine</keyword>
<keyword id="KW-0808">Transferase</keyword>
<dbReference type="EC" id="3.1.3.-" evidence="1"/>
<dbReference type="EC" id="2.1.1.-" evidence="2"/>
<dbReference type="EMBL" id="BC091842">
    <property type="protein sequence ID" value="AAH91842.1"/>
    <property type="molecule type" value="mRNA"/>
</dbReference>
<dbReference type="RefSeq" id="NP_001014353.1">
    <property type="nucleotide sequence ID" value="NM_001014331.2"/>
</dbReference>
<dbReference type="SMR" id="Q58EM4"/>
<dbReference type="FunCoup" id="Q58EM4">
    <property type="interactions" value="1214"/>
</dbReference>
<dbReference type="STRING" id="7955.ENSDARP00000072525"/>
<dbReference type="PaxDb" id="7955-ENSDARP00000072525"/>
<dbReference type="DNASU" id="541518"/>
<dbReference type="Ensembl" id="ENSDART00000078062">
    <property type="protein sequence ID" value="ENSDARP00000072525"/>
    <property type="gene ID" value="ENSDARG00000055676"/>
</dbReference>
<dbReference type="GeneID" id="541518"/>
<dbReference type="KEGG" id="dre:541518"/>
<dbReference type="AGR" id="ZFIN:ZDB-GENE-050327-51"/>
<dbReference type="CTD" id="79624"/>
<dbReference type="ZFIN" id="ZDB-GENE-050327-51">
    <property type="gene designation" value="armt1"/>
</dbReference>
<dbReference type="eggNOG" id="KOG3870">
    <property type="taxonomic scope" value="Eukaryota"/>
</dbReference>
<dbReference type="HOGENOM" id="CLU_030117_2_1_1"/>
<dbReference type="InParanoid" id="Q58EM4"/>
<dbReference type="OMA" id="INMWSNC"/>
<dbReference type="OrthoDB" id="541375at2759"/>
<dbReference type="PhylomeDB" id="Q58EM4"/>
<dbReference type="TreeFam" id="TF314853"/>
<dbReference type="PRO" id="PR:Q58EM4"/>
<dbReference type="Proteomes" id="UP000000437">
    <property type="component" value="Alternate scaffold 20"/>
</dbReference>
<dbReference type="Proteomes" id="UP000000437">
    <property type="component" value="Chromosome 20"/>
</dbReference>
<dbReference type="Bgee" id="ENSDARG00000055676">
    <property type="expression patterns" value="Expressed in tail and 22 other cell types or tissues"/>
</dbReference>
<dbReference type="ExpressionAtlas" id="Q58EM4">
    <property type="expression patterns" value="baseline"/>
</dbReference>
<dbReference type="GO" id="GO:0097023">
    <property type="term" value="F:fructose 6-phosphate aldolase activity"/>
    <property type="evidence" value="ECO:0007669"/>
    <property type="project" value="RHEA"/>
</dbReference>
<dbReference type="GO" id="GO:0103026">
    <property type="term" value="F:fructose-1-phosphatase activity"/>
    <property type="evidence" value="ECO:0007669"/>
    <property type="project" value="RHEA"/>
</dbReference>
<dbReference type="GO" id="GO:0046872">
    <property type="term" value="F:metal ion binding"/>
    <property type="evidence" value="ECO:0007669"/>
    <property type="project" value="UniProtKB-KW"/>
</dbReference>
<dbReference type="GO" id="GO:0016791">
    <property type="term" value="F:phosphatase activity"/>
    <property type="evidence" value="ECO:0000318"/>
    <property type="project" value="GO_Central"/>
</dbReference>
<dbReference type="GO" id="GO:0051998">
    <property type="term" value="F:protein carboxyl O-methyltransferase activity"/>
    <property type="evidence" value="ECO:0000250"/>
    <property type="project" value="UniProtKB"/>
</dbReference>
<dbReference type="GO" id="GO:0008983">
    <property type="term" value="F:protein-glutamate O-methyltransferase activity"/>
    <property type="evidence" value="ECO:0007669"/>
    <property type="project" value="RHEA"/>
</dbReference>
<dbReference type="GO" id="GO:0008757">
    <property type="term" value="F:S-adenosylmethionine-dependent methyltransferase activity"/>
    <property type="evidence" value="ECO:0000250"/>
    <property type="project" value="UniProtKB"/>
</dbReference>
<dbReference type="GO" id="GO:0006974">
    <property type="term" value="P:DNA damage response"/>
    <property type="evidence" value="ECO:0000250"/>
    <property type="project" value="UniProtKB"/>
</dbReference>
<dbReference type="GO" id="GO:0032259">
    <property type="term" value="P:methylation"/>
    <property type="evidence" value="ECO:0007669"/>
    <property type="project" value="UniProtKB-KW"/>
</dbReference>
<dbReference type="FunFam" id="3.40.50.10880:FF:000002">
    <property type="entry name" value="Acidic residue methyltransferase 1"/>
    <property type="match status" value="1"/>
</dbReference>
<dbReference type="FunFam" id="1.20.930.60:FF:000001">
    <property type="entry name" value="protein-glutamate O-methyltransferase isoform X1"/>
    <property type="match status" value="1"/>
</dbReference>
<dbReference type="Gene3D" id="1.20.930.60">
    <property type="match status" value="1"/>
</dbReference>
<dbReference type="Gene3D" id="3.40.50.10880">
    <property type="entry name" value="Uncharacterised protein PF01937, DUF89, domain 3"/>
    <property type="match status" value="1"/>
</dbReference>
<dbReference type="InterPro" id="IPR036075">
    <property type="entry name" value="ARMT-1-like_metal-bd_sf"/>
</dbReference>
<dbReference type="InterPro" id="IPR039763">
    <property type="entry name" value="ARMT1"/>
</dbReference>
<dbReference type="InterPro" id="IPR002791">
    <property type="entry name" value="ARMT1-like_metal-bd"/>
</dbReference>
<dbReference type="PANTHER" id="PTHR12260">
    <property type="entry name" value="DAMAGE-CONTROL PHOSPHATASE ARMT1"/>
    <property type="match status" value="1"/>
</dbReference>
<dbReference type="PANTHER" id="PTHR12260:SF6">
    <property type="entry name" value="DAMAGE-CONTROL PHOSPHATASE ARMT1"/>
    <property type="match status" value="1"/>
</dbReference>
<dbReference type="Pfam" id="PF01937">
    <property type="entry name" value="ARMT1-like_dom"/>
    <property type="match status" value="1"/>
</dbReference>
<dbReference type="SUPFAM" id="SSF111321">
    <property type="entry name" value="AF1104-like"/>
    <property type="match status" value="1"/>
</dbReference>
<name>ARMT1_DANRE</name>
<gene>
    <name evidence="2" type="primary">armt1</name>
    <name evidence="3" type="ORF">zgc:110816</name>
</gene>
<proteinExistence type="evidence at transcript level"/>
<comment type="function">
    <text evidence="1 2">Metal-dependent phosphatase that shows phosphatase activity against several substrates, including fructose-1-phosphate and fructose-6-phosphate (By similarity). Its preference for fructose-1-phosphate, a strong glycating agent that causes DNA damage rather than a canonical yeast metabolite, suggests a damage-control function in hexose phosphate metabolism (By similarity). Has also been shown to have O-methyltransferase activity that methylates glutamate residues of target proteins to form gamma-glutamyl methyl ester residues (By similarity). Possibly methylates PCNA, suggesting it is involved in the DNA damage response (By similarity).</text>
</comment>
<comment type="catalytic activity">
    <reaction evidence="1">
        <text>beta-D-fructose 1-phosphate + H2O = D-fructose + phosphate</text>
        <dbReference type="Rhea" id="RHEA:35603"/>
        <dbReference type="ChEBI" id="CHEBI:15377"/>
        <dbReference type="ChEBI" id="CHEBI:37721"/>
        <dbReference type="ChEBI" id="CHEBI:43474"/>
        <dbReference type="ChEBI" id="CHEBI:138881"/>
    </reaction>
</comment>
<comment type="catalytic activity">
    <reaction evidence="1">
        <text>beta-D-fructose 6-phosphate = dihydroxyacetone + D-glyceraldehyde 3-phosphate</text>
        <dbReference type="Rhea" id="RHEA:28002"/>
        <dbReference type="ChEBI" id="CHEBI:16016"/>
        <dbReference type="ChEBI" id="CHEBI:57634"/>
        <dbReference type="ChEBI" id="CHEBI:59776"/>
    </reaction>
</comment>
<comment type="catalytic activity">
    <reaction evidence="2">
        <text>L-glutamyl-[protein] + S-adenosyl-L-methionine = [protein]-L-glutamate 5-O-methyl ester + S-adenosyl-L-homocysteine</text>
        <dbReference type="Rhea" id="RHEA:24452"/>
        <dbReference type="Rhea" id="RHEA-COMP:10208"/>
        <dbReference type="Rhea" id="RHEA-COMP:10311"/>
        <dbReference type="ChEBI" id="CHEBI:29973"/>
        <dbReference type="ChEBI" id="CHEBI:57856"/>
        <dbReference type="ChEBI" id="CHEBI:59789"/>
        <dbReference type="ChEBI" id="CHEBI:82795"/>
    </reaction>
</comment>
<comment type="cofactor">
    <cofactor evidence="1">
        <name>Mn(2+)</name>
        <dbReference type="ChEBI" id="CHEBI:29035"/>
    </cofactor>
    <cofactor evidence="1">
        <name>Ni(2+)</name>
        <dbReference type="ChEBI" id="CHEBI:49786"/>
    </cofactor>
</comment>
<comment type="domain">
    <text evidence="1">Subfamily III proteins have a conserved RTxK motif about 40-50 residues from the C-terminus; the threonine may be replaced by serine or cysteine.</text>
</comment>
<comment type="PTM">
    <text evidence="2">Automethylated.</text>
</comment>
<comment type="similarity">
    <text evidence="4">Belongs to the damage-control phosphatase family. Sugar phosphate phosphatase III subfamily.</text>
</comment>
<comment type="caution">
    <text evidence="2">Human C6orf211 has been reportedly associated with a protein carboxyl methyltransferase activity, but whether this protein indeed has such an activity remains to be determined (By similarity). It has been later shown to belong to a family of metal-dependent phosphatases implicated in metabolite damage-control (By similarity).</text>
</comment>
<protein>
    <recommendedName>
        <fullName evidence="1">Damage-control phosphatase ARMT1</fullName>
        <ecNumber evidence="1">3.1.3.-</ecNumber>
    </recommendedName>
    <alternativeName>
        <fullName evidence="2">Acidic residue methyltransferase 1</fullName>
    </alternativeName>
    <alternativeName>
        <fullName evidence="2">Protein-glutamate O-methyltransferase</fullName>
        <ecNumber evidence="2">2.1.1.-</ecNumber>
    </alternativeName>
    <alternativeName>
        <fullName evidence="1">Sugar phosphate phosphatase ARMT1</fullName>
    </alternativeName>
</protein>
<accession>Q58EM4</accession>